<keyword id="KW-0963">Cytoplasm</keyword>
<keyword id="KW-0479">Metal-binding</keyword>
<keyword id="KW-0520">NAD</keyword>
<keyword id="KW-0539">Nucleus</keyword>
<keyword id="KW-0560">Oxidoreductase</keyword>
<keyword id="KW-0597">Phosphoprotein</keyword>
<keyword id="KW-1185">Reference proteome</keyword>
<keyword id="KW-0862">Zinc</keyword>
<protein>
    <recommendedName>
        <fullName>Probable diacetyl reductase [(R)-acetoin forming] 2</fullName>
        <ecNumber>1.1.1.303</ecNumber>
    </recommendedName>
</protein>
<evidence type="ECO:0000250" key="1"/>
<evidence type="ECO:0000250" key="2">
    <source>
        <dbReference type="UniProtKB" id="P39714"/>
    </source>
</evidence>
<evidence type="ECO:0000256" key="3">
    <source>
        <dbReference type="SAM" id="MobiDB-lite"/>
    </source>
</evidence>
<evidence type="ECO:0000269" key="4">
    <source>
    </source>
</evidence>
<evidence type="ECO:0000269" key="5">
    <source>
    </source>
</evidence>
<evidence type="ECO:0000269" key="6">
    <source>
    </source>
</evidence>
<evidence type="ECO:0000269" key="7">
    <source>
    </source>
</evidence>
<evidence type="ECO:0000305" key="8"/>
<name>BDH2_YEAST</name>
<accession>P39713</accession>
<accession>D6VPF8</accession>
<dbReference type="EC" id="1.1.1.303"/>
<dbReference type="EMBL" id="U12980">
    <property type="protein sequence ID" value="AAC04973.1"/>
    <property type="molecule type" value="Genomic_DNA"/>
</dbReference>
<dbReference type="EMBL" id="AY692730">
    <property type="protein sequence ID" value="AAT92749.1"/>
    <property type="molecule type" value="Genomic_DNA"/>
</dbReference>
<dbReference type="EMBL" id="BK006935">
    <property type="protein sequence ID" value="DAA06928.1"/>
    <property type="molecule type" value="Genomic_DNA"/>
</dbReference>
<dbReference type="PIR" id="S51961">
    <property type="entry name" value="S51961"/>
</dbReference>
<dbReference type="RefSeq" id="NP_009340.1">
    <property type="nucleotide sequence ID" value="NM_001178203.1"/>
</dbReference>
<dbReference type="SMR" id="P39713"/>
<dbReference type="BioGRID" id="31769">
    <property type="interactions" value="133"/>
</dbReference>
<dbReference type="DIP" id="DIP-6734N"/>
<dbReference type="FunCoup" id="P39713">
    <property type="interactions" value="155"/>
</dbReference>
<dbReference type="IntAct" id="P39713">
    <property type="interactions" value="3"/>
</dbReference>
<dbReference type="MINT" id="P39713"/>
<dbReference type="STRING" id="4932.YAL061W"/>
<dbReference type="iPTMnet" id="P39713"/>
<dbReference type="PaxDb" id="4932-YAL061W"/>
<dbReference type="PeptideAtlas" id="P39713"/>
<dbReference type="EnsemblFungi" id="YAL061W_mRNA">
    <property type="protein sequence ID" value="YAL061W"/>
    <property type="gene ID" value="YAL061W"/>
</dbReference>
<dbReference type="GeneID" id="851238"/>
<dbReference type="KEGG" id="sce:YAL061W"/>
<dbReference type="AGR" id="SGD:S000000057"/>
<dbReference type="SGD" id="S000000057">
    <property type="gene designation" value="BDH2"/>
</dbReference>
<dbReference type="VEuPathDB" id="FungiDB:YAL061W"/>
<dbReference type="eggNOG" id="KOG0024">
    <property type="taxonomic scope" value="Eukaryota"/>
</dbReference>
<dbReference type="GeneTree" id="ENSGT00940000176805"/>
<dbReference type="HOGENOM" id="CLU_026673_11_0_1"/>
<dbReference type="InParanoid" id="P39713"/>
<dbReference type="OMA" id="LFCGHCA"/>
<dbReference type="OrthoDB" id="5363962at2759"/>
<dbReference type="BioCyc" id="YEAST:G3O-28863-MONOMER"/>
<dbReference type="BioGRID-ORCS" id="851238">
    <property type="hits" value="0 hits in 10 CRISPR screens"/>
</dbReference>
<dbReference type="PRO" id="PR:P39713"/>
<dbReference type="Proteomes" id="UP000002311">
    <property type="component" value="Chromosome I"/>
</dbReference>
<dbReference type="RNAct" id="P39713">
    <property type="molecule type" value="protein"/>
</dbReference>
<dbReference type="GO" id="GO:0005737">
    <property type="term" value="C:cytoplasm"/>
    <property type="evidence" value="ECO:0007005"/>
    <property type="project" value="SGD"/>
</dbReference>
<dbReference type="GO" id="GO:0005634">
    <property type="term" value="C:nucleus"/>
    <property type="evidence" value="ECO:0007005"/>
    <property type="project" value="SGD"/>
</dbReference>
<dbReference type="GO" id="GO:0000721">
    <property type="term" value="F:(R,R)-butanediol dehydrogenase activity"/>
    <property type="evidence" value="ECO:0000318"/>
    <property type="project" value="GO_Central"/>
</dbReference>
<dbReference type="GO" id="GO:0052587">
    <property type="term" value="F:diacetyl reductase ((R)-acetoin forming) (NAD+) activity"/>
    <property type="evidence" value="ECO:0007669"/>
    <property type="project" value="UniProtKB-EC"/>
</dbReference>
<dbReference type="GO" id="GO:0016616">
    <property type="term" value="F:oxidoreductase activity, acting on the CH-OH group of donors, NAD or NADP as acceptor"/>
    <property type="evidence" value="ECO:0000250"/>
    <property type="project" value="SGD"/>
</dbReference>
<dbReference type="GO" id="GO:0008270">
    <property type="term" value="F:zinc ion binding"/>
    <property type="evidence" value="ECO:0007669"/>
    <property type="project" value="InterPro"/>
</dbReference>
<dbReference type="GO" id="GO:0034079">
    <property type="term" value="P:butanediol biosynthetic process"/>
    <property type="evidence" value="ECO:0000318"/>
    <property type="project" value="GO_Central"/>
</dbReference>
<dbReference type="CDD" id="cd08233">
    <property type="entry name" value="butanediol_DH_like"/>
    <property type="match status" value="1"/>
</dbReference>
<dbReference type="FunFam" id="3.90.180.10:FF:000031">
    <property type="entry name" value="(R,R)-butanediol dehydrogenase"/>
    <property type="match status" value="1"/>
</dbReference>
<dbReference type="FunFam" id="3.40.50.720:FF:000068">
    <property type="entry name" value="Sorbitol dehydrogenase"/>
    <property type="match status" value="1"/>
</dbReference>
<dbReference type="Gene3D" id="3.90.180.10">
    <property type="entry name" value="Medium-chain alcohol dehydrogenases, catalytic domain"/>
    <property type="match status" value="1"/>
</dbReference>
<dbReference type="Gene3D" id="3.40.50.720">
    <property type="entry name" value="NAD(P)-binding Rossmann-like Domain"/>
    <property type="match status" value="1"/>
</dbReference>
<dbReference type="InterPro" id="IPR013149">
    <property type="entry name" value="ADH-like_C"/>
</dbReference>
<dbReference type="InterPro" id="IPR013154">
    <property type="entry name" value="ADH-like_N"/>
</dbReference>
<dbReference type="InterPro" id="IPR002328">
    <property type="entry name" value="ADH_Zn_CS"/>
</dbReference>
<dbReference type="InterPro" id="IPR011032">
    <property type="entry name" value="GroES-like_sf"/>
</dbReference>
<dbReference type="InterPro" id="IPR036291">
    <property type="entry name" value="NAD(P)-bd_dom_sf"/>
</dbReference>
<dbReference type="PANTHER" id="PTHR43161:SF23">
    <property type="entry name" value="(R,R)-BUTANEDIOL DEHYDROGENASE-RELATED"/>
    <property type="match status" value="1"/>
</dbReference>
<dbReference type="PANTHER" id="PTHR43161">
    <property type="entry name" value="SORBITOL DEHYDROGENASE"/>
    <property type="match status" value="1"/>
</dbReference>
<dbReference type="Pfam" id="PF08240">
    <property type="entry name" value="ADH_N"/>
    <property type="match status" value="1"/>
</dbReference>
<dbReference type="Pfam" id="PF00107">
    <property type="entry name" value="ADH_zinc_N"/>
    <property type="match status" value="1"/>
</dbReference>
<dbReference type="SUPFAM" id="SSF50129">
    <property type="entry name" value="GroES-like"/>
    <property type="match status" value="1"/>
</dbReference>
<dbReference type="SUPFAM" id="SSF51735">
    <property type="entry name" value="NAD(P)-binding Rossmann-fold domains"/>
    <property type="match status" value="1"/>
</dbReference>
<dbReference type="PROSITE" id="PS00059">
    <property type="entry name" value="ADH_ZINC"/>
    <property type="match status" value="1"/>
</dbReference>
<organism>
    <name type="scientific">Saccharomyces cerevisiae (strain ATCC 204508 / S288c)</name>
    <name type="common">Baker's yeast</name>
    <dbReference type="NCBI Taxonomy" id="559292"/>
    <lineage>
        <taxon>Eukaryota</taxon>
        <taxon>Fungi</taxon>
        <taxon>Dikarya</taxon>
        <taxon>Ascomycota</taxon>
        <taxon>Saccharomycotina</taxon>
        <taxon>Saccharomycetes</taxon>
        <taxon>Saccharomycetales</taxon>
        <taxon>Saccharomycetaceae</taxon>
        <taxon>Saccharomyces</taxon>
    </lineage>
</organism>
<comment type="function">
    <text evidence="8">Catalyzes the irreversible reduction of 2,3-butanediol to (S)-acetoin in the presence of NADH.</text>
</comment>
<comment type="catalytic activity">
    <reaction>
        <text>(R)-acetoin + NAD(+) = diacetyl + NADH + H(+)</text>
        <dbReference type="Rhea" id="RHEA:22900"/>
        <dbReference type="ChEBI" id="CHEBI:15378"/>
        <dbReference type="ChEBI" id="CHEBI:15686"/>
        <dbReference type="ChEBI" id="CHEBI:16583"/>
        <dbReference type="ChEBI" id="CHEBI:57540"/>
        <dbReference type="ChEBI" id="CHEBI:57945"/>
        <dbReference type="EC" id="1.1.1.303"/>
    </reaction>
</comment>
<comment type="cofactor">
    <cofactor evidence="1">
        <name>Zn(2+)</name>
        <dbReference type="ChEBI" id="CHEBI:29105"/>
    </cofactor>
    <text evidence="1">Binds 2 Zn(2+) ions per subunit.</text>
</comment>
<comment type="subcellular location">
    <subcellularLocation>
        <location evidence="5">Cytoplasm</location>
    </subcellularLocation>
    <subcellularLocation>
        <location evidence="5">Nucleus</location>
    </subcellularLocation>
</comment>
<comment type="induction">
    <text evidence="4 7">Expression is controlled by the PDR1 transcription factor and the glucose-responsive transcription factor RGT1.</text>
</comment>
<comment type="miscellaneous">
    <text evidence="6">Present with 3090 molecules/cell in log phase SD medium.</text>
</comment>
<comment type="similarity">
    <text evidence="8">Belongs to the zinc-containing alcohol dehydrogenase family.</text>
</comment>
<reference key="1">
    <citation type="journal article" date="1995" name="Proc. Natl. Acad. Sci. U.S.A.">
        <title>The nucleotide sequence of chromosome I from Saccharomyces cerevisiae.</title>
        <authorList>
            <person name="Bussey H."/>
            <person name="Kaback D.B."/>
            <person name="Zhong W.-W."/>
            <person name="Vo D.H."/>
            <person name="Clark M.W."/>
            <person name="Fortin N."/>
            <person name="Hall J."/>
            <person name="Ouellette B.F.F."/>
            <person name="Keng T."/>
            <person name="Barton A.B."/>
            <person name="Su Y."/>
            <person name="Davies C.J."/>
            <person name="Storms R.K."/>
        </authorList>
    </citation>
    <scope>NUCLEOTIDE SEQUENCE [LARGE SCALE GENOMIC DNA]</scope>
    <source>
        <strain>ATCC 204508 / S288c</strain>
    </source>
</reference>
<reference key="2">
    <citation type="journal article" date="2014" name="G3 (Bethesda)">
        <title>The reference genome sequence of Saccharomyces cerevisiae: Then and now.</title>
        <authorList>
            <person name="Engel S.R."/>
            <person name="Dietrich F.S."/>
            <person name="Fisk D.G."/>
            <person name="Binkley G."/>
            <person name="Balakrishnan R."/>
            <person name="Costanzo M.C."/>
            <person name="Dwight S.S."/>
            <person name="Hitz B.C."/>
            <person name="Karra K."/>
            <person name="Nash R.S."/>
            <person name="Weng S."/>
            <person name="Wong E.D."/>
            <person name="Lloyd P."/>
            <person name="Skrzypek M.S."/>
            <person name="Miyasato S.R."/>
            <person name="Simison M."/>
            <person name="Cherry J.M."/>
        </authorList>
    </citation>
    <scope>GENOME REANNOTATION</scope>
    <source>
        <strain>ATCC 204508 / S288c</strain>
    </source>
</reference>
<reference key="3">
    <citation type="journal article" date="2007" name="Genome Res.">
        <title>Approaching a complete repository of sequence-verified protein-encoding clones for Saccharomyces cerevisiae.</title>
        <authorList>
            <person name="Hu Y."/>
            <person name="Rolfs A."/>
            <person name="Bhullar B."/>
            <person name="Murthy T.V.S."/>
            <person name="Zhu C."/>
            <person name="Berger M.F."/>
            <person name="Camargo A.A."/>
            <person name="Kelley F."/>
            <person name="McCarron S."/>
            <person name="Jepson D."/>
            <person name="Richardson A."/>
            <person name="Raphael J."/>
            <person name="Moreira D."/>
            <person name="Taycher E."/>
            <person name="Zuo D."/>
            <person name="Mohr S."/>
            <person name="Kane M.F."/>
            <person name="Williamson J."/>
            <person name="Simpson A.J.G."/>
            <person name="Bulyk M.L."/>
            <person name="Harlow E."/>
            <person name="Marsischky G."/>
            <person name="Kolodner R.D."/>
            <person name="LaBaer J."/>
        </authorList>
    </citation>
    <scope>NUCLEOTIDE SEQUENCE [GENOMIC DNA]</scope>
    <source>
        <strain>ATCC 204508 / S288c</strain>
    </source>
</reference>
<reference key="4">
    <citation type="journal article" date="2001" name="Gene">
        <title>Novel target genes of the yeast regulator Pdr1p: a contribution of the TPO1 gene in resistance to quinidine and other drugs.</title>
        <authorList>
            <person name="do Valle Matta M.A."/>
            <person name="Jonniaux J.-L."/>
            <person name="Balzi E."/>
            <person name="Goffeau A."/>
            <person name="van den Hazel B."/>
        </authorList>
    </citation>
    <scope>INDUCTION</scope>
</reference>
<reference key="5">
    <citation type="journal article" date="2003" name="Nature">
        <title>Global analysis of protein localization in budding yeast.</title>
        <authorList>
            <person name="Huh W.-K."/>
            <person name="Falvo J.V."/>
            <person name="Gerke L.C."/>
            <person name="Carroll A.S."/>
            <person name="Howson R.W."/>
            <person name="Weissman J.S."/>
            <person name="O'Shea E.K."/>
        </authorList>
    </citation>
    <scope>SUBCELLULAR LOCATION [LARGE SCALE ANALYSIS]</scope>
</reference>
<reference key="6">
    <citation type="journal article" date="2003" name="Nature">
        <title>Global analysis of protein expression in yeast.</title>
        <authorList>
            <person name="Ghaemmaghami S."/>
            <person name="Huh W.-K."/>
            <person name="Bower K."/>
            <person name="Howson R.W."/>
            <person name="Belle A."/>
            <person name="Dephoure N."/>
            <person name="O'Shea E.K."/>
            <person name="Weissman J.S."/>
        </authorList>
    </citation>
    <scope>LEVEL OF PROTEIN EXPRESSION [LARGE SCALE ANALYSIS]</scope>
</reference>
<reference key="7">
    <citation type="journal article" date="2004" name="Eukaryot. Cell">
        <title>Regulatory network connecting two glucose signal transduction pathways in Saccharomyces cerevisiae.</title>
        <authorList>
            <person name="Kaniak A."/>
            <person name="Xue Z."/>
            <person name="Macool D."/>
            <person name="Kim J.-H."/>
            <person name="Johnston M."/>
        </authorList>
    </citation>
    <scope>INDUCTION</scope>
</reference>
<gene>
    <name type="primary">BDH2</name>
    <name type="ordered locus">YAL061W</name>
    <name type="ORF">FUN50</name>
</gene>
<feature type="chain" id="PRO_0000160897" description="Probable diacetyl reductase [(R)-acetoin forming] 2">
    <location>
        <begin position="1"/>
        <end position="417"/>
    </location>
</feature>
<feature type="region of interest" description="Disordered" evidence="3">
    <location>
        <begin position="380"/>
        <end position="417"/>
    </location>
</feature>
<feature type="compositionally biased region" description="Basic and acidic residues" evidence="3">
    <location>
        <begin position="381"/>
        <end position="417"/>
    </location>
</feature>
<feature type="binding site" evidence="1">
    <location>
        <position position="39"/>
    </location>
    <ligand>
        <name>Zn(2+)</name>
        <dbReference type="ChEBI" id="CHEBI:29105"/>
        <label>1</label>
        <note>catalytic</note>
    </ligand>
</feature>
<feature type="binding site" evidence="1">
    <location>
        <position position="64"/>
    </location>
    <ligand>
        <name>Zn(2+)</name>
        <dbReference type="ChEBI" id="CHEBI:29105"/>
        <label>1</label>
        <note>catalytic</note>
    </ligand>
</feature>
<feature type="binding site" evidence="1">
    <location>
        <position position="120"/>
    </location>
    <ligand>
        <name>Zn(2+)</name>
        <dbReference type="ChEBI" id="CHEBI:29105"/>
        <label>2</label>
    </ligand>
</feature>
<feature type="binding site" evidence="1">
    <location>
        <position position="123"/>
    </location>
    <ligand>
        <name>Zn(2+)</name>
        <dbReference type="ChEBI" id="CHEBI:29105"/>
        <label>2</label>
    </ligand>
</feature>
<feature type="binding site" evidence="1">
    <location>
        <position position="131"/>
    </location>
    <ligand>
        <name>Zn(2+)</name>
        <dbReference type="ChEBI" id="CHEBI:29105"/>
        <label>2</label>
    </ligand>
</feature>
<feature type="binding site" evidence="1">
    <location>
        <position position="173"/>
    </location>
    <ligand>
        <name>Zn(2+)</name>
        <dbReference type="ChEBI" id="CHEBI:29105"/>
        <label>1</label>
        <note>catalytic</note>
    </ligand>
</feature>
<feature type="modified residue" description="Phosphoserine" evidence="2">
    <location>
        <position position="63"/>
    </location>
</feature>
<sequence length="417" mass="46099">MRALAYFGKGNIRFTNHLKEPHIVAPDELVIDIEWCGICGTDLHEYTDGPIFFPEDGHTHEISHNPLPQAMGHEMAGTVLEVGPGVKNLKVGDKVVVEPTGTCRDRYRWPLSPNVDKEWCAACKKGYYNICSYLGLCGAGVQSGGFAERVVMNESHCYKVPDFVPLDVAALIQPLAVCWHAIRVCEFKAGSTALIIGAGPIGLGTILALNAAGCKDIVVSEPAKVRRELAEKMGARVYDPTAHAAKESIDYLRSIADGGDGFDYTFDCSGLEVTLNAAIQCLTFRGTAVNLAMWGHHKIQFSPMDITLHERKYTGSMCYTHHDFEAVIEALEEGRIDIDRARHMITGRVNIEDGLDGAIMKLINEKESTIKIILTPNNHGELNREADNEKKEISELSSRKDQERLRESINEAKLRHT</sequence>
<proteinExistence type="evidence at protein level"/>